<keyword id="KW-1185">Reference proteome</keyword>
<name>Y8418_DICDI</name>
<sequence>MSILKTILSLGSNNKNLNNNFIINKNINNQNNLFNHNNNNTQGWKPNYFVVGTAKQNAHL</sequence>
<reference key="1">
    <citation type="journal article" date="2002" name="Nature">
        <title>Sequence and analysis of chromosome 2 of Dictyostelium discoideum.</title>
        <authorList>
            <person name="Gloeckner G."/>
            <person name="Eichinger L."/>
            <person name="Szafranski K."/>
            <person name="Pachebat J.A."/>
            <person name="Bankier A.T."/>
            <person name="Dear P.H."/>
            <person name="Lehmann R."/>
            <person name="Baumgart C."/>
            <person name="Parra G."/>
            <person name="Abril J.F."/>
            <person name="Guigo R."/>
            <person name="Kumpf K."/>
            <person name="Tunggal B."/>
            <person name="Cox E.C."/>
            <person name="Quail M.A."/>
            <person name="Platzer M."/>
            <person name="Rosenthal A."/>
            <person name="Noegel A.A."/>
        </authorList>
    </citation>
    <scope>NUCLEOTIDE SEQUENCE [LARGE SCALE GENOMIC DNA]</scope>
    <source>
        <strain>AX4</strain>
    </source>
</reference>
<reference key="2">
    <citation type="journal article" date="2005" name="Nature">
        <title>The genome of the social amoeba Dictyostelium discoideum.</title>
        <authorList>
            <person name="Eichinger L."/>
            <person name="Pachebat J.A."/>
            <person name="Gloeckner G."/>
            <person name="Rajandream M.A."/>
            <person name="Sucgang R."/>
            <person name="Berriman M."/>
            <person name="Song J."/>
            <person name="Olsen R."/>
            <person name="Szafranski K."/>
            <person name="Xu Q."/>
            <person name="Tunggal B."/>
            <person name="Kummerfeld S."/>
            <person name="Madera M."/>
            <person name="Konfortov B.A."/>
            <person name="Rivero F."/>
            <person name="Bankier A.T."/>
            <person name="Lehmann R."/>
            <person name="Hamlin N."/>
            <person name="Davies R."/>
            <person name="Gaudet P."/>
            <person name="Fey P."/>
            <person name="Pilcher K."/>
            <person name="Chen G."/>
            <person name="Saunders D."/>
            <person name="Sodergren E.J."/>
            <person name="Davis P."/>
            <person name="Kerhornou A."/>
            <person name="Nie X."/>
            <person name="Hall N."/>
            <person name="Anjard C."/>
            <person name="Hemphill L."/>
            <person name="Bason N."/>
            <person name="Farbrother P."/>
            <person name="Desany B."/>
            <person name="Just E."/>
            <person name="Morio T."/>
            <person name="Rost R."/>
            <person name="Churcher C.M."/>
            <person name="Cooper J."/>
            <person name="Haydock S."/>
            <person name="van Driessche N."/>
            <person name="Cronin A."/>
            <person name="Goodhead I."/>
            <person name="Muzny D.M."/>
            <person name="Mourier T."/>
            <person name="Pain A."/>
            <person name="Lu M."/>
            <person name="Harper D."/>
            <person name="Lindsay R."/>
            <person name="Hauser H."/>
            <person name="James K.D."/>
            <person name="Quiles M."/>
            <person name="Madan Babu M."/>
            <person name="Saito T."/>
            <person name="Buchrieser C."/>
            <person name="Wardroper A."/>
            <person name="Felder M."/>
            <person name="Thangavelu M."/>
            <person name="Johnson D."/>
            <person name="Knights A."/>
            <person name="Loulseged H."/>
            <person name="Mungall K.L."/>
            <person name="Oliver K."/>
            <person name="Price C."/>
            <person name="Quail M.A."/>
            <person name="Urushihara H."/>
            <person name="Hernandez J."/>
            <person name="Rabbinowitsch E."/>
            <person name="Steffen D."/>
            <person name="Sanders M."/>
            <person name="Ma J."/>
            <person name="Kohara Y."/>
            <person name="Sharp S."/>
            <person name="Simmonds M.N."/>
            <person name="Spiegler S."/>
            <person name="Tivey A."/>
            <person name="Sugano S."/>
            <person name="White B."/>
            <person name="Walker D."/>
            <person name="Woodward J.R."/>
            <person name="Winckler T."/>
            <person name="Tanaka Y."/>
            <person name="Shaulsky G."/>
            <person name="Schleicher M."/>
            <person name="Weinstock G.M."/>
            <person name="Rosenthal A."/>
            <person name="Cox E.C."/>
            <person name="Chisholm R.L."/>
            <person name="Gibbs R.A."/>
            <person name="Loomis W.F."/>
            <person name="Platzer M."/>
            <person name="Kay R.R."/>
            <person name="Williams J.G."/>
            <person name="Dear P.H."/>
            <person name="Noegel A.A."/>
            <person name="Barrell B.G."/>
            <person name="Kuspa A."/>
        </authorList>
    </citation>
    <scope>NUCLEOTIDE SEQUENCE [LARGE SCALE GENOMIC DNA]</scope>
    <source>
        <strain>AX4</strain>
    </source>
</reference>
<dbReference type="EMBL" id="AAFI02000006">
    <property type="protein sequence ID" value="EAL71641.1"/>
    <property type="molecule type" value="Genomic_DNA"/>
</dbReference>
<dbReference type="RefSeq" id="XP_645598.1">
    <property type="nucleotide sequence ID" value="XM_640506.1"/>
</dbReference>
<dbReference type="PaxDb" id="44689-DDB0168418"/>
<dbReference type="EnsemblProtists" id="EAL71641">
    <property type="protein sequence ID" value="EAL71641"/>
    <property type="gene ID" value="DDB_G0271554"/>
</dbReference>
<dbReference type="GeneID" id="8618053"/>
<dbReference type="KEGG" id="ddi:DDB_G0271554"/>
<dbReference type="dictyBase" id="DDB_G0271554"/>
<dbReference type="HOGENOM" id="CLU_2946463_0_0_1"/>
<dbReference type="InParanoid" id="Q86JG2"/>
<dbReference type="PRO" id="PR:Q86JG2"/>
<dbReference type="Proteomes" id="UP000002195">
    <property type="component" value="Chromosome 2"/>
</dbReference>
<protein>
    <recommendedName>
        <fullName>Putative uncharacterized protein DDB_G0271554</fullName>
    </recommendedName>
</protein>
<proteinExistence type="predicted"/>
<gene>
    <name type="ORF">DDB_G0271554</name>
</gene>
<feature type="chain" id="PRO_0000348157" description="Putative uncharacterized protein DDB_G0271554">
    <location>
        <begin position="1"/>
        <end position="60"/>
    </location>
</feature>
<accession>Q86JG2</accession>
<accession>Q55AU8</accession>
<organism>
    <name type="scientific">Dictyostelium discoideum</name>
    <name type="common">Social amoeba</name>
    <dbReference type="NCBI Taxonomy" id="44689"/>
    <lineage>
        <taxon>Eukaryota</taxon>
        <taxon>Amoebozoa</taxon>
        <taxon>Evosea</taxon>
        <taxon>Eumycetozoa</taxon>
        <taxon>Dictyostelia</taxon>
        <taxon>Dictyosteliales</taxon>
        <taxon>Dictyosteliaceae</taxon>
        <taxon>Dictyostelium</taxon>
    </lineage>
</organism>